<protein>
    <recommendedName>
        <fullName>Uncharacterized HTH-type transcriptional regulator YydK</fullName>
    </recommendedName>
</protein>
<comment type="sequence caution" evidence="2">
    <conflict type="erroneous initiation">
        <sequence resource="EMBL-CDS" id="BAA11271"/>
    </conflict>
</comment>
<reference key="1">
    <citation type="journal article" date="1997" name="DNA Res.">
        <title>Sequence analysis of the 36-kb region between gntZ and trnY genes of Bacillus subtilis genome.</title>
        <authorList>
            <person name="Kasahara Y."/>
            <person name="Nakai S."/>
            <person name="Ogasawara N."/>
        </authorList>
    </citation>
    <scope>NUCLEOTIDE SEQUENCE [GENOMIC DNA]</scope>
    <source>
        <strain>168</strain>
    </source>
</reference>
<reference key="2">
    <citation type="journal article" date="1997" name="Nature">
        <title>The complete genome sequence of the Gram-positive bacterium Bacillus subtilis.</title>
        <authorList>
            <person name="Kunst F."/>
            <person name="Ogasawara N."/>
            <person name="Moszer I."/>
            <person name="Albertini A.M."/>
            <person name="Alloni G."/>
            <person name="Azevedo V."/>
            <person name="Bertero M.G."/>
            <person name="Bessieres P."/>
            <person name="Bolotin A."/>
            <person name="Borchert S."/>
            <person name="Borriss R."/>
            <person name="Boursier L."/>
            <person name="Brans A."/>
            <person name="Braun M."/>
            <person name="Brignell S.C."/>
            <person name="Bron S."/>
            <person name="Brouillet S."/>
            <person name="Bruschi C.V."/>
            <person name="Caldwell B."/>
            <person name="Capuano V."/>
            <person name="Carter N.M."/>
            <person name="Choi S.-K."/>
            <person name="Codani J.-J."/>
            <person name="Connerton I.F."/>
            <person name="Cummings N.J."/>
            <person name="Daniel R.A."/>
            <person name="Denizot F."/>
            <person name="Devine K.M."/>
            <person name="Duesterhoeft A."/>
            <person name="Ehrlich S.D."/>
            <person name="Emmerson P.T."/>
            <person name="Entian K.-D."/>
            <person name="Errington J."/>
            <person name="Fabret C."/>
            <person name="Ferrari E."/>
            <person name="Foulger D."/>
            <person name="Fritz C."/>
            <person name="Fujita M."/>
            <person name="Fujita Y."/>
            <person name="Fuma S."/>
            <person name="Galizzi A."/>
            <person name="Galleron N."/>
            <person name="Ghim S.-Y."/>
            <person name="Glaser P."/>
            <person name="Goffeau A."/>
            <person name="Golightly E.J."/>
            <person name="Grandi G."/>
            <person name="Guiseppi G."/>
            <person name="Guy B.J."/>
            <person name="Haga K."/>
            <person name="Haiech J."/>
            <person name="Harwood C.R."/>
            <person name="Henaut A."/>
            <person name="Hilbert H."/>
            <person name="Holsappel S."/>
            <person name="Hosono S."/>
            <person name="Hullo M.-F."/>
            <person name="Itaya M."/>
            <person name="Jones L.-M."/>
            <person name="Joris B."/>
            <person name="Karamata D."/>
            <person name="Kasahara Y."/>
            <person name="Klaerr-Blanchard M."/>
            <person name="Klein C."/>
            <person name="Kobayashi Y."/>
            <person name="Koetter P."/>
            <person name="Koningstein G."/>
            <person name="Krogh S."/>
            <person name="Kumano M."/>
            <person name="Kurita K."/>
            <person name="Lapidus A."/>
            <person name="Lardinois S."/>
            <person name="Lauber J."/>
            <person name="Lazarevic V."/>
            <person name="Lee S.-M."/>
            <person name="Levine A."/>
            <person name="Liu H."/>
            <person name="Masuda S."/>
            <person name="Mauel C."/>
            <person name="Medigue C."/>
            <person name="Medina N."/>
            <person name="Mellado R.P."/>
            <person name="Mizuno M."/>
            <person name="Moestl D."/>
            <person name="Nakai S."/>
            <person name="Noback M."/>
            <person name="Noone D."/>
            <person name="O'Reilly M."/>
            <person name="Ogawa K."/>
            <person name="Ogiwara A."/>
            <person name="Oudega B."/>
            <person name="Park S.-H."/>
            <person name="Parro V."/>
            <person name="Pohl T.M."/>
            <person name="Portetelle D."/>
            <person name="Porwollik S."/>
            <person name="Prescott A.M."/>
            <person name="Presecan E."/>
            <person name="Pujic P."/>
            <person name="Purnelle B."/>
            <person name="Rapoport G."/>
            <person name="Rey M."/>
            <person name="Reynolds S."/>
            <person name="Rieger M."/>
            <person name="Rivolta C."/>
            <person name="Rocha E."/>
            <person name="Roche B."/>
            <person name="Rose M."/>
            <person name="Sadaie Y."/>
            <person name="Sato T."/>
            <person name="Scanlan E."/>
            <person name="Schleich S."/>
            <person name="Schroeter R."/>
            <person name="Scoffone F."/>
            <person name="Sekiguchi J."/>
            <person name="Sekowska A."/>
            <person name="Seror S.J."/>
            <person name="Serror P."/>
            <person name="Shin B.-S."/>
            <person name="Soldo B."/>
            <person name="Sorokin A."/>
            <person name="Tacconi E."/>
            <person name="Takagi T."/>
            <person name="Takahashi H."/>
            <person name="Takemaru K."/>
            <person name="Takeuchi M."/>
            <person name="Tamakoshi A."/>
            <person name="Tanaka T."/>
            <person name="Terpstra P."/>
            <person name="Tognoni A."/>
            <person name="Tosato V."/>
            <person name="Uchiyama S."/>
            <person name="Vandenbol M."/>
            <person name="Vannier F."/>
            <person name="Vassarotti A."/>
            <person name="Viari A."/>
            <person name="Wambutt R."/>
            <person name="Wedler E."/>
            <person name="Wedler H."/>
            <person name="Weitzenegger T."/>
            <person name="Winters P."/>
            <person name="Wipat A."/>
            <person name="Yamamoto H."/>
            <person name="Yamane K."/>
            <person name="Yasumoto K."/>
            <person name="Yata K."/>
            <person name="Yoshida K."/>
            <person name="Yoshikawa H.-F."/>
            <person name="Zumstein E."/>
            <person name="Yoshikawa H."/>
            <person name="Danchin A."/>
        </authorList>
    </citation>
    <scope>NUCLEOTIDE SEQUENCE [LARGE SCALE GENOMIC DNA]</scope>
    <source>
        <strain>168</strain>
    </source>
</reference>
<accession>Q45591</accession>
<proteinExistence type="evidence at protein level"/>
<organism>
    <name type="scientific">Bacillus subtilis (strain 168)</name>
    <dbReference type="NCBI Taxonomy" id="224308"/>
    <lineage>
        <taxon>Bacteria</taxon>
        <taxon>Bacillati</taxon>
        <taxon>Bacillota</taxon>
        <taxon>Bacilli</taxon>
        <taxon>Bacillales</taxon>
        <taxon>Bacillaceae</taxon>
        <taxon>Bacillus</taxon>
    </lineage>
</organism>
<keyword id="KW-0002">3D-structure</keyword>
<keyword id="KW-0238">DNA-binding</keyword>
<keyword id="KW-1185">Reference proteome</keyword>
<keyword id="KW-0804">Transcription</keyword>
<keyword id="KW-0805">Transcription regulation</keyword>
<name>YYDK_BACSU</name>
<feature type="chain" id="PRO_0000050692" description="Uncharacterized HTH-type transcriptional regulator YydK">
    <location>
        <begin position="1"/>
        <end position="236"/>
    </location>
</feature>
<feature type="domain" description="HTH gntR-type" evidence="1">
    <location>
        <begin position="1"/>
        <end position="69"/>
    </location>
</feature>
<feature type="DNA-binding region" description="H-T-H motif" evidence="1">
    <location>
        <begin position="29"/>
        <end position="48"/>
    </location>
</feature>
<feature type="helix" evidence="3">
    <location>
        <begin position="6"/>
        <end position="17"/>
    </location>
</feature>
<feature type="helix" evidence="3">
    <location>
        <begin position="29"/>
        <end position="35"/>
    </location>
</feature>
<feature type="helix" evidence="3">
    <location>
        <begin position="40"/>
        <end position="52"/>
    </location>
</feature>
<feature type="strand" evidence="3">
    <location>
        <begin position="55"/>
        <end position="59"/>
    </location>
</feature>
<feature type="turn" evidence="3">
    <location>
        <begin position="60"/>
        <end position="62"/>
    </location>
</feature>
<feature type="strand" evidence="3">
    <location>
        <begin position="63"/>
        <end position="66"/>
    </location>
</feature>
<feature type="strand" evidence="3">
    <location>
        <begin position="75"/>
        <end position="78"/>
    </location>
</feature>
<feature type="helix" evidence="3">
    <location>
        <begin position="79"/>
        <end position="81"/>
    </location>
</feature>
<feature type="strand" evidence="3">
    <location>
        <begin position="92"/>
        <end position="102"/>
    </location>
</feature>
<feature type="helix" evidence="3">
    <location>
        <begin position="106"/>
        <end position="112"/>
    </location>
</feature>
<feature type="strand" evidence="3">
    <location>
        <begin position="120"/>
        <end position="129"/>
    </location>
</feature>
<feature type="strand" evidence="3">
    <location>
        <begin position="132"/>
        <end position="142"/>
    </location>
</feature>
<feature type="turn" evidence="3">
    <location>
        <begin position="143"/>
        <end position="145"/>
    </location>
</feature>
<feature type="helix" evidence="3">
    <location>
        <begin position="151"/>
        <end position="154"/>
    </location>
</feature>
<feature type="helix" evidence="3">
    <location>
        <begin position="158"/>
        <end position="164"/>
    </location>
</feature>
<feature type="strand" evidence="3">
    <location>
        <begin position="170"/>
        <end position="181"/>
    </location>
</feature>
<feature type="helix" evidence="3">
    <location>
        <begin position="184"/>
        <end position="190"/>
    </location>
</feature>
<feature type="strand" evidence="3">
    <location>
        <begin position="196"/>
        <end position="207"/>
    </location>
</feature>
<feature type="strand" evidence="3">
    <location>
        <begin position="212"/>
        <end position="220"/>
    </location>
</feature>
<feature type="turn" evidence="3">
    <location>
        <begin position="222"/>
        <end position="224"/>
    </location>
</feature>
<feature type="strand" evidence="3">
    <location>
        <begin position="227"/>
        <end position="231"/>
    </location>
</feature>
<evidence type="ECO:0000255" key="1">
    <source>
        <dbReference type="PROSITE-ProRule" id="PRU00307"/>
    </source>
</evidence>
<evidence type="ECO:0000305" key="2"/>
<evidence type="ECO:0007829" key="3">
    <source>
        <dbReference type="PDB" id="3BWG"/>
    </source>
</evidence>
<dbReference type="EMBL" id="D78193">
    <property type="protein sequence ID" value="BAA11271.1"/>
    <property type="status" value="ALT_INIT"/>
    <property type="molecule type" value="Genomic_DNA"/>
</dbReference>
<dbReference type="EMBL" id="AL009126">
    <property type="protein sequence ID" value="CAB16050.1"/>
    <property type="molecule type" value="Genomic_DNA"/>
</dbReference>
<dbReference type="PIR" id="A70092">
    <property type="entry name" value="A70092"/>
</dbReference>
<dbReference type="RefSeq" id="NP_391893.1">
    <property type="nucleotide sequence ID" value="NC_000964.3"/>
</dbReference>
<dbReference type="RefSeq" id="WP_003226988.1">
    <property type="nucleotide sequence ID" value="NZ_OZ025638.1"/>
</dbReference>
<dbReference type="PDB" id="3BWG">
    <property type="method" value="X-ray"/>
    <property type="resolution" value="2.09 A"/>
    <property type="chains" value="A/B/C=1-236"/>
</dbReference>
<dbReference type="PDBsum" id="3BWG"/>
<dbReference type="SMR" id="Q45591"/>
<dbReference type="FunCoup" id="Q45591">
    <property type="interactions" value="40"/>
</dbReference>
<dbReference type="STRING" id="224308.BSU40130"/>
<dbReference type="PaxDb" id="224308-BSU40130"/>
<dbReference type="DNASU" id="937726"/>
<dbReference type="EnsemblBacteria" id="CAB16050">
    <property type="protein sequence ID" value="CAB16050"/>
    <property type="gene ID" value="BSU_40130"/>
</dbReference>
<dbReference type="GeneID" id="937726"/>
<dbReference type="KEGG" id="bsu:BSU40130"/>
<dbReference type="PATRIC" id="fig|224308.179.peg.4340"/>
<dbReference type="eggNOG" id="COG2188">
    <property type="taxonomic scope" value="Bacteria"/>
</dbReference>
<dbReference type="InParanoid" id="Q45591"/>
<dbReference type="OrthoDB" id="2141316at2"/>
<dbReference type="PhylomeDB" id="Q45591"/>
<dbReference type="BioCyc" id="BSUB:BSU40130-MONOMER"/>
<dbReference type="EvolutionaryTrace" id="Q45591"/>
<dbReference type="Proteomes" id="UP000001570">
    <property type="component" value="Chromosome"/>
</dbReference>
<dbReference type="GO" id="GO:0003677">
    <property type="term" value="F:DNA binding"/>
    <property type="evidence" value="ECO:0007669"/>
    <property type="project" value="UniProtKB-KW"/>
</dbReference>
<dbReference type="GO" id="GO:0003700">
    <property type="term" value="F:DNA-binding transcription factor activity"/>
    <property type="evidence" value="ECO:0007669"/>
    <property type="project" value="InterPro"/>
</dbReference>
<dbReference type="GO" id="GO:0045892">
    <property type="term" value="P:negative regulation of DNA-templated transcription"/>
    <property type="evidence" value="ECO:0000318"/>
    <property type="project" value="GO_Central"/>
</dbReference>
<dbReference type="CDD" id="cd07377">
    <property type="entry name" value="WHTH_GntR"/>
    <property type="match status" value="1"/>
</dbReference>
<dbReference type="Gene3D" id="3.40.1410.10">
    <property type="entry name" value="Chorismate lyase-like"/>
    <property type="match status" value="1"/>
</dbReference>
<dbReference type="Gene3D" id="1.10.10.10">
    <property type="entry name" value="Winged helix-like DNA-binding domain superfamily/Winged helix DNA-binding domain"/>
    <property type="match status" value="1"/>
</dbReference>
<dbReference type="InterPro" id="IPR050679">
    <property type="entry name" value="Bact_HTH_transcr_reg"/>
</dbReference>
<dbReference type="InterPro" id="IPR028978">
    <property type="entry name" value="Chorismate_lyase_/UTRA_dom_sf"/>
</dbReference>
<dbReference type="InterPro" id="IPR000524">
    <property type="entry name" value="Tscrpt_reg_HTH_GntR"/>
</dbReference>
<dbReference type="InterPro" id="IPR011663">
    <property type="entry name" value="UTRA"/>
</dbReference>
<dbReference type="InterPro" id="IPR036388">
    <property type="entry name" value="WH-like_DNA-bd_sf"/>
</dbReference>
<dbReference type="InterPro" id="IPR036390">
    <property type="entry name" value="WH_DNA-bd_sf"/>
</dbReference>
<dbReference type="PANTHER" id="PTHR44846:SF4">
    <property type="entry name" value="HTH GNTR-TYPE DOMAIN-CONTAINING PROTEIN"/>
    <property type="match status" value="1"/>
</dbReference>
<dbReference type="PANTHER" id="PTHR44846">
    <property type="entry name" value="MANNOSYL-D-GLYCERATE TRANSPORT/METABOLISM SYSTEM REPRESSOR MNGR-RELATED"/>
    <property type="match status" value="1"/>
</dbReference>
<dbReference type="Pfam" id="PF00392">
    <property type="entry name" value="GntR"/>
    <property type="match status" value="1"/>
</dbReference>
<dbReference type="Pfam" id="PF07702">
    <property type="entry name" value="UTRA"/>
    <property type="match status" value="1"/>
</dbReference>
<dbReference type="SMART" id="SM00345">
    <property type="entry name" value="HTH_GNTR"/>
    <property type="match status" value="1"/>
</dbReference>
<dbReference type="SMART" id="SM00866">
    <property type="entry name" value="UTRA"/>
    <property type="match status" value="1"/>
</dbReference>
<dbReference type="SUPFAM" id="SSF64288">
    <property type="entry name" value="Chorismate lyase-like"/>
    <property type="match status" value="1"/>
</dbReference>
<dbReference type="SUPFAM" id="SSF46785">
    <property type="entry name" value="Winged helix' DNA-binding domain"/>
    <property type="match status" value="1"/>
</dbReference>
<dbReference type="PROSITE" id="PS50949">
    <property type="entry name" value="HTH_GNTR"/>
    <property type="match status" value="1"/>
</dbReference>
<sequence>MLKYQQIATEIETYIEEHQLQQGDKLPVLETLMAQFEVSKSTITKSLELLEQKGAIFQVRGSGIFVRKHKRKGYISLLSNQGFKKDLEDFNVTSKVIELDVRKPTPEAAENLNIGMDEDIYYVKRVRYINGQTLCYEESYYTKSIVTYLNNEIVSHSIFHYIREGLGLKIGFSDLFLHVGQLNEEEAEYLGLEAGLPKLYIESIFHLTNGQPFDYSKISYNYEQSQFVVQANSFLL</sequence>
<gene>
    <name type="primary">yydK</name>
    <name type="ordered locus">BSU40130</name>
</gene>